<comment type="function">
    <text evidence="3">Likely acts as a modulator of nicotinic acetylcholine receptors (nAChRs) activity. In vitro acts on nAChRs in a subtype- and stoichiometry-dependent manner. Modulates specifically alpha-3(3):beta-4(2) nAChRs by enhancing the sensitivity to ACh, decreasing ACh-induced maximal current response and increasing the rate of desensitization to ACh; has no effect on alpha-7 homomeric nAChRs; modulates alpha-3(2):alpha-5:beta-4(2) nAChRs in the context of CHRNA5/alpha-5 variant Asn-398 but not its wild-type sequence. However, according to another report in vitro it can weakly inhibits alpha-7 nAChRs.</text>
</comment>
<comment type="subcellular location">
    <subcellularLocation>
        <location evidence="5">Cell membrane</location>
        <topology evidence="5">Lipid-anchor</topology>
        <topology evidence="5">GPI-anchor</topology>
    </subcellularLocation>
</comment>
<comment type="alternative products">
    <event type="alternative splicing"/>
    <isoform>
        <id>Q9D7F2-2</id>
        <name>2</name>
        <sequence type="displayed"/>
    </isoform>
    <isoform>
        <id>Q9D7F2-1</id>
        <name>1</name>
        <sequence type="described" ref="VSP_060613"/>
    </isoform>
</comment>
<reference key="1">
    <citation type="journal article" date="2005" name="Science">
        <title>The transcriptional landscape of the mammalian genome.</title>
        <authorList>
            <person name="Carninci P."/>
            <person name="Kasukawa T."/>
            <person name="Katayama S."/>
            <person name="Gough J."/>
            <person name="Frith M.C."/>
            <person name="Maeda N."/>
            <person name="Oyama R."/>
            <person name="Ravasi T."/>
            <person name="Lenhard B."/>
            <person name="Wells C."/>
            <person name="Kodzius R."/>
            <person name="Shimokawa K."/>
            <person name="Bajic V.B."/>
            <person name="Brenner S.E."/>
            <person name="Batalov S."/>
            <person name="Forrest A.R."/>
            <person name="Zavolan M."/>
            <person name="Davis M.J."/>
            <person name="Wilming L.G."/>
            <person name="Aidinis V."/>
            <person name="Allen J.E."/>
            <person name="Ambesi-Impiombato A."/>
            <person name="Apweiler R."/>
            <person name="Aturaliya R.N."/>
            <person name="Bailey T.L."/>
            <person name="Bansal M."/>
            <person name="Baxter L."/>
            <person name="Beisel K.W."/>
            <person name="Bersano T."/>
            <person name="Bono H."/>
            <person name="Chalk A.M."/>
            <person name="Chiu K.P."/>
            <person name="Choudhary V."/>
            <person name="Christoffels A."/>
            <person name="Clutterbuck D.R."/>
            <person name="Crowe M.L."/>
            <person name="Dalla E."/>
            <person name="Dalrymple B.P."/>
            <person name="de Bono B."/>
            <person name="Della Gatta G."/>
            <person name="di Bernardo D."/>
            <person name="Down T."/>
            <person name="Engstrom P."/>
            <person name="Fagiolini M."/>
            <person name="Faulkner G."/>
            <person name="Fletcher C.F."/>
            <person name="Fukushima T."/>
            <person name="Furuno M."/>
            <person name="Futaki S."/>
            <person name="Gariboldi M."/>
            <person name="Georgii-Hemming P."/>
            <person name="Gingeras T.R."/>
            <person name="Gojobori T."/>
            <person name="Green R.E."/>
            <person name="Gustincich S."/>
            <person name="Harbers M."/>
            <person name="Hayashi Y."/>
            <person name="Hensch T.K."/>
            <person name="Hirokawa N."/>
            <person name="Hill D."/>
            <person name="Huminiecki L."/>
            <person name="Iacono M."/>
            <person name="Ikeo K."/>
            <person name="Iwama A."/>
            <person name="Ishikawa T."/>
            <person name="Jakt M."/>
            <person name="Kanapin A."/>
            <person name="Katoh M."/>
            <person name="Kawasawa Y."/>
            <person name="Kelso J."/>
            <person name="Kitamura H."/>
            <person name="Kitano H."/>
            <person name="Kollias G."/>
            <person name="Krishnan S.P."/>
            <person name="Kruger A."/>
            <person name="Kummerfeld S.K."/>
            <person name="Kurochkin I.V."/>
            <person name="Lareau L.F."/>
            <person name="Lazarevic D."/>
            <person name="Lipovich L."/>
            <person name="Liu J."/>
            <person name="Liuni S."/>
            <person name="McWilliam S."/>
            <person name="Madan Babu M."/>
            <person name="Madera M."/>
            <person name="Marchionni L."/>
            <person name="Matsuda H."/>
            <person name="Matsuzawa S."/>
            <person name="Miki H."/>
            <person name="Mignone F."/>
            <person name="Miyake S."/>
            <person name="Morris K."/>
            <person name="Mottagui-Tabar S."/>
            <person name="Mulder N."/>
            <person name="Nakano N."/>
            <person name="Nakauchi H."/>
            <person name="Ng P."/>
            <person name="Nilsson R."/>
            <person name="Nishiguchi S."/>
            <person name="Nishikawa S."/>
            <person name="Nori F."/>
            <person name="Ohara O."/>
            <person name="Okazaki Y."/>
            <person name="Orlando V."/>
            <person name="Pang K.C."/>
            <person name="Pavan W.J."/>
            <person name="Pavesi G."/>
            <person name="Pesole G."/>
            <person name="Petrovsky N."/>
            <person name="Piazza S."/>
            <person name="Reed J."/>
            <person name="Reid J.F."/>
            <person name="Ring B.Z."/>
            <person name="Ringwald M."/>
            <person name="Rost B."/>
            <person name="Ruan Y."/>
            <person name="Salzberg S.L."/>
            <person name="Sandelin A."/>
            <person name="Schneider C."/>
            <person name="Schoenbach C."/>
            <person name="Sekiguchi K."/>
            <person name="Semple C.A."/>
            <person name="Seno S."/>
            <person name="Sessa L."/>
            <person name="Sheng Y."/>
            <person name="Shibata Y."/>
            <person name="Shimada H."/>
            <person name="Shimada K."/>
            <person name="Silva D."/>
            <person name="Sinclair B."/>
            <person name="Sperling S."/>
            <person name="Stupka E."/>
            <person name="Sugiura K."/>
            <person name="Sultana R."/>
            <person name="Takenaka Y."/>
            <person name="Taki K."/>
            <person name="Tammoja K."/>
            <person name="Tan S.L."/>
            <person name="Tang S."/>
            <person name="Taylor M.S."/>
            <person name="Tegner J."/>
            <person name="Teichmann S.A."/>
            <person name="Ueda H.R."/>
            <person name="van Nimwegen E."/>
            <person name="Verardo R."/>
            <person name="Wei C.L."/>
            <person name="Yagi K."/>
            <person name="Yamanishi H."/>
            <person name="Zabarovsky E."/>
            <person name="Zhu S."/>
            <person name="Zimmer A."/>
            <person name="Hide W."/>
            <person name="Bult C."/>
            <person name="Grimmond S.M."/>
            <person name="Teasdale R.D."/>
            <person name="Liu E.T."/>
            <person name="Brusic V."/>
            <person name="Quackenbush J."/>
            <person name="Wahlestedt C."/>
            <person name="Mattick J.S."/>
            <person name="Hume D.A."/>
            <person name="Kai C."/>
            <person name="Sasaki D."/>
            <person name="Tomaru Y."/>
            <person name="Fukuda S."/>
            <person name="Kanamori-Katayama M."/>
            <person name="Suzuki M."/>
            <person name="Aoki J."/>
            <person name="Arakawa T."/>
            <person name="Iida J."/>
            <person name="Imamura K."/>
            <person name="Itoh M."/>
            <person name="Kato T."/>
            <person name="Kawaji H."/>
            <person name="Kawagashira N."/>
            <person name="Kawashima T."/>
            <person name="Kojima M."/>
            <person name="Kondo S."/>
            <person name="Konno H."/>
            <person name="Nakano K."/>
            <person name="Ninomiya N."/>
            <person name="Nishio T."/>
            <person name="Okada M."/>
            <person name="Plessy C."/>
            <person name="Shibata K."/>
            <person name="Shiraki T."/>
            <person name="Suzuki S."/>
            <person name="Tagami M."/>
            <person name="Waki K."/>
            <person name="Watahiki A."/>
            <person name="Okamura-Oho Y."/>
            <person name="Suzuki H."/>
            <person name="Kawai J."/>
            <person name="Hayashizaki Y."/>
        </authorList>
    </citation>
    <scope>NUCLEOTIDE SEQUENCE [LARGE SCALE MRNA] (ISOFORM 1)</scope>
    <source>
        <strain>C57BL/6J</strain>
        <tissue>Tongue</tissue>
    </source>
</reference>
<reference key="2">
    <citation type="journal article" date="2004" name="Genome Res.">
        <title>The status, quality, and expansion of the NIH full-length cDNA project: the Mammalian Gene Collection (MGC).</title>
        <authorList>
            <consortium name="The MGC Project Team"/>
        </authorList>
    </citation>
    <scope>NUCLEOTIDE SEQUENCE [LARGE SCALE MRNA] (ISOFORM 2)</scope>
</reference>
<keyword id="KW-0025">Alternative splicing</keyword>
<keyword id="KW-1003">Cell membrane</keyword>
<keyword id="KW-1015">Disulfide bond</keyword>
<keyword id="KW-0325">Glycoprotein</keyword>
<keyword id="KW-0336">GPI-anchor</keyword>
<keyword id="KW-0449">Lipoprotein</keyword>
<keyword id="KW-0472">Membrane</keyword>
<keyword id="KW-1185">Reference proteome</keyword>
<keyword id="KW-0732">Signal</keyword>
<dbReference type="EMBL" id="AK009282">
    <property type="protein sequence ID" value="BAB26192.1"/>
    <property type="molecule type" value="mRNA"/>
</dbReference>
<dbReference type="EMBL" id="BC126943">
    <property type="protein sequence ID" value="AAI26944.1"/>
    <property type="molecule type" value="mRNA"/>
</dbReference>
<dbReference type="CCDS" id="CCDS16025.1">
    <molecule id="Q9D7F2-2"/>
</dbReference>
<dbReference type="RefSeq" id="NP_001366310.1">
    <molecule id="Q9D7F2-2"/>
    <property type="nucleotide sequence ID" value="NM_001379381.1"/>
</dbReference>
<dbReference type="RefSeq" id="NP_001366311.1">
    <molecule id="Q9D7F2-2"/>
    <property type="nucleotide sequence ID" value="NM_001379382.1"/>
</dbReference>
<dbReference type="RefSeq" id="NP_001366312.1">
    <molecule id="Q9D7F2-2"/>
    <property type="nucleotide sequence ID" value="NM_001379383.1"/>
</dbReference>
<dbReference type="RefSeq" id="NP_001366313.1">
    <molecule id="Q9D7F2-2"/>
    <property type="nucleotide sequence ID" value="NM_001379384.1"/>
</dbReference>
<dbReference type="RefSeq" id="NP_001366314.1">
    <molecule id="Q9D7F2-2"/>
    <property type="nucleotide sequence ID" value="NM_001379385.1"/>
</dbReference>
<dbReference type="RefSeq" id="NP_001366315.1">
    <molecule id="Q9D7F2-2"/>
    <property type="nucleotide sequence ID" value="NM_001379386.1"/>
</dbReference>
<dbReference type="RefSeq" id="NP_001366316.1">
    <molecule id="Q9D7F2-2"/>
    <property type="nucleotide sequence ID" value="NM_001379387.1"/>
</dbReference>
<dbReference type="RefSeq" id="NP_082266.2">
    <molecule id="Q9D7F2-2"/>
    <property type="nucleotide sequence ID" value="NM_027990.4"/>
</dbReference>
<dbReference type="RefSeq" id="XP_006498413.1">
    <molecule id="Q9D7F2-1"/>
    <property type="nucleotide sequence ID" value="XM_006498350.5"/>
</dbReference>
<dbReference type="RefSeq" id="XP_006498414.1">
    <molecule id="Q9D7F2-1"/>
    <property type="nucleotide sequence ID" value="XM_006498351.5"/>
</dbReference>
<dbReference type="RefSeq" id="XP_006498415.1">
    <molecule id="Q9D7F2-1"/>
    <property type="nucleotide sequence ID" value="XM_006498352.5"/>
</dbReference>
<dbReference type="RefSeq" id="XP_006498416.1">
    <molecule id="Q9D7F2-1"/>
    <property type="nucleotide sequence ID" value="XM_006498353.5"/>
</dbReference>
<dbReference type="RefSeq" id="XP_006498417.1">
    <molecule id="Q9D7F2-1"/>
    <property type="nucleotide sequence ID" value="XM_006498354.5"/>
</dbReference>
<dbReference type="RefSeq" id="XP_006498418.1">
    <property type="nucleotide sequence ID" value="XM_006498355.3"/>
</dbReference>
<dbReference type="RefSeq" id="XP_006498419.1">
    <property type="nucleotide sequence ID" value="XM_006498356.3"/>
</dbReference>
<dbReference type="RefSeq" id="XP_006498420.1">
    <property type="nucleotide sequence ID" value="XM_006498357.3"/>
</dbReference>
<dbReference type="RefSeq" id="XP_006498421.1">
    <property type="nucleotide sequence ID" value="XM_006498358.3"/>
</dbReference>
<dbReference type="RefSeq" id="XP_006498422.1">
    <molecule id="Q9D7F2-2"/>
    <property type="nucleotide sequence ID" value="XM_006498359.5"/>
</dbReference>
<dbReference type="RefSeq" id="XP_017174756.1">
    <molecule id="Q9D7F2-1"/>
    <property type="nucleotide sequence ID" value="XM_017319267.1"/>
</dbReference>
<dbReference type="SMR" id="Q9D7F2"/>
<dbReference type="BioGRID" id="215013">
    <property type="interactions" value="1"/>
</dbReference>
<dbReference type="FunCoup" id="Q9D7F2">
    <property type="interactions" value="371"/>
</dbReference>
<dbReference type="STRING" id="10090.ENSMUSP00000028103"/>
<dbReference type="GlyGen" id="Q9D7F2">
    <property type="glycosylation" value="1 site, 1 N-linked glycan (1 site)"/>
</dbReference>
<dbReference type="PaxDb" id="10090-ENSMUSP00000028103"/>
<dbReference type="ProteomicsDB" id="291965">
    <molecule id="Q9D7F2-2"/>
</dbReference>
<dbReference type="ProteomicsDB" id="291966">
    <molecule id="Q9D7F2-2"/>
</dbReference>
<dbReference type="Antibodypedia" id="62112">
    <property type="antibodies" value="21 antibodies from 11 providers"/>
</dbReference>
<dbReference type="DNASU" id="71897"/>
<dbReference type="Ensembl" id="ENSMUST00000028103.13">
    <molecule id="Q9D7F2-2"/>
    <property type="protein sequence ID" value="ENSMUSP00000028103.8"/>
    <property type="gene ID" value="ENSMUSG00000026765.13"/>
</dbReference>
<dbReference type="GeneID" id="71897"/>
<dbReference type="KEGG" id="mmu:71897"/>
<dbReference type="UCSC" id="uc008jpz.1">
    <molecule id="Q9D7F2-2"/>
    <property type="organism name" value="mouse"/>
</dbReference>
<dbReference type="AGR" id="MGI:1919147"/>
<dbReference type="CTD" id="130576"/>
<dbReference type="MGI" id="MGI:1919147">
    <property type="gene designation" value="Lypd6b"/>
</dbReference>
<dbReference type="VEuPathDB" id="HostDB:ENSMUSG00000026765"/>
<dbReference type="eggNOG" id="ENOG502RXMG">
    <property type="taxonomic scope" value="Eukaryota"/>
</dbReference>
<dbReference type="GeneTree" id="ENSGT00390000000220"/>
<dbReference type="HOGENOM" id="CLU_105474_0_0_1"/>
<dbReference type="InParanoid" id="Q9D7F2"/>
<dbReference type="OMA" id="FVGCHRH"/>
<dbReference type="OrthoDB" id="6149028at2759"/>
<dbReference type="PhylomeDB" id="Q9D7F2"/>
<dbReference type="TreeFam" id="TF332443"/>
<dbReference type="Reactome" id="R-MMU-163125">
    <property type="pathway name" value="Post-translational modification: synthesis of GPI-anchored proteins"/>
</dbReference>
<dbReference type="BioGRID-ORCS" id="71897">
    <property type="hits" value="2 hits in 77 CRISPR screens"/>
</dbReference>
<dbReference type="ChiTaRS" id="Lypd6b">
    <property type="organism name" value="mouse"/>
</dbReference>
<dbReference type="PRO" id="PR:Q9D7F2"/>
<dbReference type="Proteomes" id="UP000000589">
    <property type="component" value="Chromosome 2"/>
</dbReference>
<dbReference type="RNAct" id="Q9D7F2">
    <property type="molecule type" value="protein"/>
</dbReference>
<dbReference type="Bgee" id="ENSMUSG00000026765">
    <property type="expression patterns" value="Expressed in renal medulla collecting duct and 165 other cell types or tissues"/>
</dbReference>
<dbReference type="GO" id="GO:0005886">
    <property type="term" value="C:plasma membrane"/>
    <property type="evidence" value="ECO:0007669"/>
    <property type="project" value="UniProtKB-SubCell"/>
</dbReference>
<dbReference type="GO" id="GO:0098552">
    <property type="term" value="C:side of membrane"/>
    <property type="evidence" value="ECO:0007669"/>
    <property type="project" value="UniProtKB-KW"/>
</dbReference>
<dbReference type="GO" id="GO:0030548">
    <property type="term" value="F:acetylcholine receptor regulator activity"/>
    <property type="evidence" value="ECO:0007669"/>
    <property type="project" value="Ensembl"/>
</dbReference>
<dbReference type="CDD" id="cd23626">
    <property type="entry name" value="TFP_LU_ECD_LYPD6B"/>
    <property type="match status" value="1"/>
</dbReference>
<dbReference type="FunFam" id="2.10.60.10:FF:000004">
    <property type="entry name" value="Ly6/PLAUR domain-containing protein 6"/>
    <property type="match status" value="1"/>
</dbReference>
<dbReference type="Gene3D" id="2.10.60.10">
    <property type="entry name" value="CD59"/>
    <property type="match status" value="1"/>
</dbReference>
<dbReference type="InterPro" id="IPR039457">
    <property type="entry name" value="LYPD6-like"/>
</dbReference>
<dbReference type="InterPro" id="IPR045860">
    <property type="entry name" value="Snake_toxin-like_sf"/>
</dbReference>
<dbReference type="PANTHER" id="PTHR31171">
    <property type="entry name" value="LY6/PLAUR DOMAIN-CONTAINING PROTEIN 6"/>
    <property type="match status" value="1"/>
</dbReference>
<dbReference type="PANTHER" id="PTHR31171:SF3">
    <property type="entry name" value="LY6_PLAUR DOMAIN-CONTAINING PROTEIN 6B"/>
    <property type="match status" value="1"/>
</dbReference>
<dbReference type="Pfam" id="PF16975">
    <property type="entry name" value="UPAR_LY6_2"/>
    <property type="match status" value="1"/>
</dbReference>
<dbReference type="SUPFAM" id="SSF57302">
    <property type="entry name" value="Snake toxin-like"/>
    <property type="match status" value="1"/>
</dbReference>
<name>LPD6B_MOUSE</name>
<protein>
    <recommendedName>
        <fullName>Ly6/PLAUR domain-containing protein 6B</fullName>
    </recommendedName>
</protein>
<proteinExistence type="evidence at transcript level"/>
<accession>Q9D7F2</accession>
<accession>A0JNT6</accession>
<gene>
    <name type="primary">Lypd6b</name>
</gene>
<feature type="signal peptide" evidence="4">
    <location>
        <begin position="1"/>
        <end position="25"/>
    </location>
</feature>
<feature type="chain" id="PRO_0000321952" description="Ly6/PLAUR domain-containing protein 6B">
    <location>
        <begin position="26"/>
        <end position="148"/>
    </location>
</feature>
<feature type="propeptide" id="PRO_0000321953" description="Removed in mature form" evidence="4">
    <location>
        <begin position="149"/>
        <end position="172"/>
    </location>
</feature>
<feature type="domain" description="UPAR/Ly6">
    <location>
        <begin position="46"/>
        <end position="137"/>
    </location>
</feature>
<feature type="region of interest" description="Sufficient for inhibiting alpha-7 nAChR currents" evidence="3">
    <location>
        <begin position="46"/>
        <end position="140"/>
    </location>
</feature>
<feature type="lipid moiety-binding region" description="GPI-anchor amidated serine" evidence="4">
    <location>
        <position position="148"/>
    </location>
</feature>
<feature type="disulfide bond" evidence="1 2">
    <location>
        <begin position="48"/>
        <end position="76"/>
    </location>
</feature>
<feature type="disulfide bond" evidence="1 2">
    <location>
        <begin position="51"/>
        <end position="60"/>
    </location>
</feature>
<feature type="disulfide bond" evidence="1 2">
    <location>
        <begin position="69"/>
        <end position="95"/>
    </location>
</feature>
<feature type="disulfide bond" evidence="1 2">
    <location>
        <begin position="101"/>
        <end position="120"/>
    </location>
</feature>
<feature type="disulfide bond" evidence="3">
    <location>
        <begin position="106"/>
        <end position="117"/>
    </location>
</feature>
<feature type="disulfide bond" evidence="1 2">
    <location>
        <begin position="121"/>
        <end position="126"/>
    </location>
</feature>
<feature type="splice variant" id="VSP_060613" description="In isoform 1.">
    <original>M</original>
    <variation>MCSSFQRHTTLTCPIRVDRM</variation>
    <location>
        <position position="1"/>
    </location>
</feature>
<evidence type="ECO:0000250" key="1">
    <source>
        <dbReference type="UniProtKB" id="P0DP57"/>
    </source>
</evidence>
<evidence type="ECO:0000250" key="2">
    <source>
        <dbReference type="UniProtKB" id="P0DP58"/>
    </source>
</evidence>
<evidence type="ECO:0000250" key="3">
    <source>
        <dbReference type="UniProtKB" id="Q8NI32"/>
    </source>
</evidence>
<evidence type="ECO:0000255" key="4"/>
<evidence type="ECO:0000305" key="5"/>
<organism>
    <name type="scientific">Mus musculus</name>
    <name type="common">Mouse</name>
    <dbReference type="NCBI Taxonomy" id="10090"/>
    <lineage>
        <taxon>Eukaryota</taxon>
        <taxon>Metazoa</taxon>
        <taxon>Chordata</taxon>
        <taxon>Craniata</taxon>
        <taxon>Vertebrata</taxon>
        <taxon>Euteleostomi</taxon>
        <taxon>Mammalia</taxon>
        <taxon>Eutheria</taxon>
        <taxon>Euarchontoglires</taxon>
        <taxon>Glires</taxon>
        <taxon>Rodentia</taxon>
        <taxon>Myomorpha</taxon>
        <taxon>Muroidea</taxon>
        <taxon>Muridae</taxon>
        <taxon>Murinae</taxon>
        <taxon>Mus</taxon>
        <taxon>Mus</taxon>
    </lineage>
</organism>
<sequence>MLLLCHILAVTILQILIISENWVFAKNINFYNVRPPLDPTPFPNSFKCFTCENAGDNYNCNRWAEDKWCPQDTQYCLTVHHFTSHGRSTSITKKCASKNECHFVGCRHSRDSEHTECRSCCEGMICNVELPTNHTNAVFAVMHAQRTSGSSVSSVPSPYLLVLAWLFMLPLL</sequence>